<sequence>MAEENLELSLLCTESNVDDEGMIVDETPIEISIPQMGFSQSESEEIIMEMVEKEKQHLPSDDYIKRLRSGDLDLNVGRRDALNWIWKACEVHQFGPLCFCLAMNYLDRFLSVHDLPSGKGWILQLLAVACLSLAAKIEETEVPMLIDLQVGDPQFVFEAKSVQRMELLVLNKLKWRLRAITPCSYIRYFLRKMSKCDQEPSNTLISRSLQVIASTTKGIDFLEFRPSEVAAAVALSVSGELQRVHFDNSSFSPLFSLLQKERVKKIGEMIESDGSDLCSQTPNGVLEVSACCFSFKTHDSSSSYTHLS</sequence>
<name>CCD41_ARATH</name>
<feature type="chain" id="PRO_0000287029" description="Cyclin-D4-1">
    <location>
        <begin position="1"/>
        <end position="308"/>
    </location>
</feature>
<feature type="sequence conflict" description="In Ref. 4; AAM60963." evidence="5" ref="4">
    <original>K</original>
    <variation>R</variation>
    <location>
        <position position="172"/>
    </location>
</feature>
<feature type="sequence conflict" description="In Ref. 1; CAB41347." evidence="5" ref="1">
    <original>V</original>
    <variation>A</variation>
    <location>
        <position position="229"/>
    </location>
</feature>
<feature type="sequence conflict" description="In Ref. 4; AAM60963." evidence="5" ref="4">
    <original>C</original>
    <variation>F</variation>
    <location>
        <position position="278"/>
    </location>
</feature>
<comment type="function">
    <text evidence="4">May activate cell cycle in the root apical meristem (RAM) and promote embryonic root (radicle) protrusion.</text>
</comment>
<comment type="subunit">
    <text evidence="1 2 3">Interacts with CDKA-1, CDKB2-1, KRP4/ICK7, KRP5/ICK3, KRP6/ICK4 and KRP7/ICK5.</text>
</comment>
<comment type="interaction">
    <interactant intactId="EBI-1253202">
        <id>Q8LGA1</id>
    </interactant>
    <interactant intactId="EBI-371713">
        <id>P24100</id>
        <label>CDKA-1</label>
    </interactant>
    <organismsDiffer>false</organismsDiffer>
    <experiments>4</experiments>
</comment>
<comment type="interaction">
    <interactant intactId="EBI-1253202">
        <id>Q8LGA1</id>
    </interactant>
    <interactant intactId="EBI-1253579">
        <id>Q8LF80</id>
        <label>CDKB2-1</label>
    </interactant>
    <organismsDiffer>false</organismsDiffer>
    <experiments>4</experiments>
</comment>
<comment type="interaction">
    <interactant intactId="EBI-1253202">
        <id>Q8LGA1</id>
    </interactant>
    <interactant intactId="EBI-1773344">
        <id>Q94CL9</id>
        <label>KRP7</label>
    </interactant>
    <organismsDiffer>false</organismsDiffer>
    <experiments>2</experiments>
</comment>
<comment type="alternative products">
    <event type="alternative splicing"/>
    <isoform>
        <id>Q8LGA1-1</id>
        <name>1</name>
        <sequence type="displayed"/>
    </isoform>
    <text>A number of isoforms are produced. According to EST sequences.</text>
</comment>
<comment type="tissue specificity">
    <text evidence="1 3">Expressed in shoot apical meristem, leaf primordia vascular tissues and tapetum of anthers.</text>
</comment>
<comment type="developmental stage">
    <text evidence="1 3 4">Expressed throughout the cell cycle. Transiently expressed in the root tip during seed germination up to about 21 hours after stratification. Expressed during lateral root primordia formation, vascular tissue development, in fertilized ovules, and torpedo- and heart-stage embryos.</text>
</comment>
<comment type="induction">
    <text evidence="1">By sucrose.</text>
</comment>
<comment type="similarity">
    <text evidence="5">Belongs to the cyclin family. Cyclin D subfamily.</text>
</comment>
<protein>
    <recommendedName>
        <fullName>Cyclin-D4-1</fullName>
    </recommendedName>
    <alternativeName>
        <fullName>G1/S-specific cyclin-D4-1</fullName>
        <shortName>CycD4;1</shortName>
    </alternativeName>
</protein>
<organism>
    <name type="scientific">Arabidopsis thaliana</name>
    <name type="common">Mouse-ear cress</name>
    <dbReference type="NCBI Taxonomy" id="3702"/>
    <lineage>
        <taxon>Eukaryota</taxon>
        <taxon>Viridiplantae</taxon>
        <taxon>Streptophyta</taxon>
        <taxon>Embryophyta</taxon>
        <taxon>Tracheophyta</taxon>
        <taxon>Spermatophyta</taxon>
        <taxon>Magnoliopsida</taxon>
        <taxon>eudicotyledons</taxon>
        <taxon>Gunneridae</taxon>
        <taxon>Pentapetalae</taxon>
        <taxon>rosids</taxon>
        <taxon>malvids</taxon>
        <taxon>Brassicales</taxon>
        <taxon>Brassicaceae</taxon>
        <taxon>Camelineae</taxon>
        <taxon>Arabidopsis</taxon>
    </lineage>
</organism>
<accession>Q8LGA1</accession>
<accession>Q9FKP7</accession>
<accession>Q9XFR7</accession>
<evidence type="ECO:0000269" key="1">
    <source>
    </source>
</evidence>
<evidence type="ECO:0000269" key="2">
    <source>
    </source>
</evidence>
<evidence type="ECO:0000269" key="3">
    <source>
    </source>
</evidence>
<evidence type="ECO:0000269" key="4">
    <source>
    </source>
</evidence>
<evidence type="ECO:0000305" key="5"/>
<proteinExistence type="evidence at protein level"/>
<reference key="1">
    <citation type="journal article" date="1999" name="Planta">
        <title>A new D-type cyclin of Arabidopsis thaliana expressed during lateral root primordia formation.</title>
        <authorList>
            <person name="de Veylder L."/>
            <person name="de Almeida Engler J."/>
            <person name="Burssens S."/>
            <person name="Manevski A."/>
            <person name="Lescure B."/>
            <person name="van Montagu M."/>
            <person name="Engler G."/>
            <person name="Inze D."/>
        </authorList>
    </citation>
    <scope>NUCLEOTIDE SEQUENCE [MRNA]</scope>
    <scope>TISSUE SPECIFICITY</scope>
    <scope>DEVELOPMENTAL STAGE</scope>
    <scope>INDUCTION</scope>
    <scope>INTERACTION WITH CDKA-1</scope>
</reference>
<reference key="2">
    <citation type="journal article" date="1998" name="DNA Res.">
        <title>Structural analysis of Arabidopsis thaliana chromosome 5. V. Sequence features of the regions of 1,381,565 bp covered by twenty one physically assigned P1 and TAC clones.</title>
        <authorList>
            <person name="Kaneko T."/>
            <person name="Kotani H."/>
            <person name="Nakamura Y."/>
            <person name="Sato S."/>
            <person name="Asamizu E."/>
            <person name="Miyajima N."/>
            <person name="Tabata S."/>
        </authorList>
    </citation>
    <scope>NUCLEOTIDE SEQUENCE [LARGE SCALE GENOMIC DNA]</scope>
    <source>
        <strain>cv. Columbia</strain>
    </source>
</reference>
<reference key="3">
    <citation type="journal article" date="2017" name="Plant J.">
        <title>Araport11: a complete reannotation of the Arabidopsis thaliana reference genome.</title>
        <authorList>
            <person name="Cheng C.Y."/>
            <person name="Krishnakumar V."/>
            <person name="Chan A.P."/>
            <person name="Thibaud-Nissen F."/>
            <person name="Schobel S."/>
            <person name="Town C.D."/>
        </authorList>
    </citation>
    <scope>GENOME REANNOTATION</scope>
    <source>
        <strain>cv. Columbia</strain>
    </source>
</reference>
<reference key="4">
    <citation type="submission" date="2002-03" db="EMBL/GenBank/DDBJ databases">
        <title>Full-length cDNA from Arabidopsis thaliana.</title>
        <authorList>
            <person name="Brover V.V."/>
            <person name="Troukhan M.E."/>
            <person name="Alexandrov N.A."/>
            <person name="Lu Y.-P."/>
            <person name="Flavell R.B."/>
            <person name="Feldmann K.A."/>
        </authorList>
    </citation>
    <scope>NUCLEOTIDE SEQUENCE [LARGE SCALE MRNA]</scope>
</reference>
<reference key="5">
    <citation type="journal article" date="2001" name="Plant Cell">
        <title>Functional analysis of cyclin-dependent kinase inhibitors of Arabidopsis.</title>
        <authorList>
            <person name="de Veylder L."/>
            <person name="Beeckman T."/>
            <person name="Beemster G.T.S."/>
            <person name="Krols L."/>
            <person name="Terras F."/>
            <person name="Landrieu I."/>
            <person name="van der Schueren E."/>
            <person name="Maes S."/>
            <person name="Naudts M."/>
            <person name="Inze D."/>
        </authorList>
    </citation>
    <scope>INTERACTION WITH KRP4/ICK7; KRP5/ICK3; KRP6/ICK4 AND KRP7/ICK5</scope>
</reference>
<reference key="6">
    <citation type="journal article" date="2003" name="Plant Physiol.">
        <title>Arabidopsis D-type cyclin CYCD4;1 is a novel cyclin partner of B2-type cyclin-dependent kinase.</title>
        <authorList>
            <person name="Kono A."/>
            <person name="Umeda-Hara C."/>
            <person name="Lee J."/>
            <person name="Ito M."/>
            <person name="Uchimiya H."/>
            <person name="Umeda M."/>
        </authorList>
    </citation>
    <scope>TISSUE SPECIFICITY</scope>
    <scope>DEVELOPMENTAL STAGE</scope>
    <scope>INTERACTION WITH CDKA-1 AND CDKB2-1</scope>
</reference>
<reference key="7">
    <citation type="journal article" date="2004" name="Plant Physiol.">
        <title>Genome-wide analysis of the cyclin family in Arabidopsis and comparative phylogenetic analysis of plant cyclin-like proteins.</title>
        <authorList>
            <person name="Wang G."/>
            <person name="Kong H."/>
            <person name="Sun Y."/>
            <person name="Zhang X."/>
            <person name="Zhang W."/>
            <person name="Altman N."/>
            <person name="dePamphilis C.W."/>
            <person name="Ma H."/>
        </authorList>
    </citation>
    <scope>GENE FAMILY</scope>
    <scope>NOMENCLATURE</scope>
</reference>
<reference key="8">
    <citation type="journal article" date="2005" name="Proc. Natl. Acad. Sci. U.S.A.">
        <title>D-type cyclins activate division in the root apex to promote seed germination in Arabidopsis.</title>
        <authorList>
            <person name="Masubelele N.H."/>
            <person name="Dewitte W."/>
            <person name="Menges M."/>
            <person name="Maughan S."/>
            <person name="Collins C."/>
            <person name="Huntley R."/>
            <person name="Nieuwland J."/>
            <person name="Scofield S."/>
            <person name="Murray J.A.H."/>
        </authorList>
    </citation>
    <scope>FUNCTION</scope>
    <scope>DEVELOPMENTAL STAGE</scope>
</reference>
<gene>
    <name type="primary">CYCD4-1</name>
    <name type="synonym">CYCD4.1</name>
    <name type="ordered locus">At5g65420</name>
    <name type="ORF">MNA5.15</name>
</gene>
<keyword id="KW-0025">Alternative splicing</keyword>
<keyword id="KW-0131">Cell cycle</keyword>
<keyword id="KW-0132">Cell division</keyword>
<keyword id="KW-0195">Cyclin</keyword>
<keyword id="KW-1185">Reference proteome</keyword>
<dbReference type="EMBL" id="AJ131636">
    <property type="protein sequence ID" value="CAB41347.1"/>
    <property type="molecule type" value="mRNA"/>
</dbReference>
<dbReference type="EMBL" id="AB011479">
    <property type="protein sequence ID" value="BAB11564.1"/>
    <property type="molecule type" value="Genomic_DNA"/>
</dbReference>
<dbReference type="EMBL" id="CP002688">
    <property type="protein sequence ID" value="AED98049.1"/>
    <property type="molecule type" value="Genomic_DNA"/>
</dbReference>
<dbReference type="EMBL" id="AY084386">
    <property type="protein sequence ID" value="AAM60963.1"/>
    <property type="molecule type" value="mRNA"/>
</dbReference>
<dbReference type="RefSeq" id="NP_201345.1">
    <molecule id="Q8LGA1-1"/>
    <property type="nucleotide sequence ID" value="NM_125940.3"/>
</dbReference>
<dbReference type="SMR" id="Q8LGA1"/>
<dbReference type="BioGRID" id="21909">
    <property type="interactions" value="22"/>
</dbReference>
<dbReference type="FunCoup" id="Q8LGA1">
    <property type="interactions" value="633"/>
</dbReference>
<dbReference type="IntAct" id="Q8LGA1">
    <property type="interactions" value="10"/>
</dbReference>
<dbReference type="STRING" id="3702.Q8LGA1"/>
<dbReference type="PaxDb" id="3702-AT5G65420.3"/>
<dbReference type="EnsemblPlants" id="AT5G65420.1">
    <molecule id="Q8LGA1-1"/>
    <property type="protein sequence ID" value="AT5G65420.1"/>
    <property type="gene ID" value="AT5G65420"/>
</dbReference>
<dbReference type="GeneID" id="836667"/>
<dbReference type="Gramene" id="AT5G65420.1">
    <molecule id="Q8LGA1-1"/>
    <property type="protein sequence ID" value="AT5G65420.1"/>
    <property type="gene ID" value="AT5G65420"/>
</dbReference>
<dbReference type="KEGG" id="ath:AT5G65420"/>
<dbReference type="Araport" id="AT5G65420"/>
<dbReference type="TAIR" id="AT5G65420">
    <property type="gene designation" value="CYCD4"/>
</dbReference>
<dbReference type="eggNOG" id="KOG0656">
    <property type="taxonomic scope" value="Eukaryota"/>
</dbReference>
<dbReference type="InParanoid" id="Q8LGA1"/>
<dbReference type="OMA" id="CFGSKTH"/>
<dbReference type="PhylomeDB" id="Q8LGA1"/>
<dbReference type="PRO" id="PR:Q8LGA1"/>
<dbReference type="Proteomes" id="UP000006548">
    <property type="component" value="Chromosome 5"/>
</dbReference>
<dbReference type="ExpressionAtlas" id="Q8LGA1">
    <property type="expression patterns" value="baseline and differential"/>
</dbReference>
<dbReference type="GO" id="GO:0051301">
    <property type="term" value="P:cell division"/>
    <property type="evidence" value="ECO:0007669"/>
    <property type="project" value="UniProtKB-KW"/>
</dbReference>
<dbReference type="CDD" id="cd20543">
    <property type="entry name" value="CYCLIN_AtCycD-like_rpt1"/>
    <property type="match status" value="1"/>
</dbReference>
<dbReference type="CDD" id="cd20544">
    <property type="entry name" value="CYCLIN_AtCycD-like_rpt2"/>
    <property type="match status" value="1"/>
</dbReference>
<dbReference type="FunFam" id="1.10.472.10:FF:000040">
    <property type="entry name" value="D6-type cyclin"/>
    <property type="match status" value="1"/>
</dbReference>
<dbReference type="FunFam" id="1.10.472.10:FF:000060">
    <property type="entry name" value="D6-type cyclin"/>
    <property type="match status" value="1"/>
</dbReference>
<dbReference type="Gene3D" id="1.10.472.10">
    <property type="entry name" value="Cyclin-like"/>
    <property type="match status" value="2"/>
</dbReference>
<dbReference type="InterPro" id="IPR039361">
    <property type="entry name" value="Cyclin"/>
</dbReference>
<dbReference type="InterPro" id="IPR013763">
    <property type="entry name" value="Cyclin-like_dom"/>
</dbReference>
<dbReference type="InterPro" id="IPR036915">
    <property type="entry name" value="Cyclin-like_sf"/>
</dbReference>
<dbReference type="InterPro" id="IPR004367">
    <property type="entry name" value="Cyclin_C-dom"/>
</dbReference>
<dbReference type="InterPro" id="IPR006671">
    <property type="entry name" value="Cyclin_N"/>
</dbReference>
<dbReference type="InterPro" id="IPR048258">
    <property type="entry name" value="Cyclins_cyclin-box"/>
</dbReference>
<dbReference type="PANTHER" id="PTHR10177">
    <property type="entry name" value="CYCLINS"/>
    <property type="match status" value="1"/>
</dbReference>
<dbReference type="Pfam" id="PF02984">
    <property type="entry name" value="Cyclin_C"/>
    <property type="match status" value="1"/>
</dbReference>
<dbReference type="Pfam" id="PF00134">
    <property type="entry name" value="Cyclin_N"/>
    <property type="match status" value="1"/>
</dbReference>
<dbReference type="SMART" id="SM00385">
    <property type="entry name" value="CYCLIN"/>
    <property type="match status" value="1"/>
</dbReference>
<dbReference type="SMART" id="SM01332">
    <property type="entry name" value="Cyclin_C"/>
    <property type="match status" value="1"/>
</dbReference>
<dbReference type="SUPFAM" id="SSF47954">
    <property type="entry name" value="Cyclin-like"/>
    <property type="match status" value="1"/>
</dbReference>
<dbReference type="PROSITE" id="PS00292">
    <property type="entry name" value="CYCLINS"/>
    <property type="match status" value="1"/>
</dbReference>